<dbReference type="GO" id="GO:0005576">
    <property type="term" value="C:extracellular region"/>
    <property type="evidence" value="ECO:0007669"/>
    <property type="project" value="UniProtKB-SubCell"/>
</dbReference>
<dbReference type="GO" id="GO:0090729">
    <property type="term" value="F:toxin activity"/>
    <property type="evidence" value="ECO:0007669"/>
    <property type="project" value="UniProtKB-KW"/>
</dbReference>
<protein>
    <recommendedName>
        <fullName evidence="3">Short cationic peptide-6b</fullName>
        <shortName evidence="3">SCP-6b</shortName>
    </recommendedName>
    <alternativeName>
        <fullName evidence="2">Short cationic peptide-6h</fullName>
        <shortName evidence="2">SCP-6h</shortName>
    </alternativeName>
    <alternativeName>
        <fullName evidence="3">Truncated variant of Cupiennin 6 family</fullName>
    </alternativeName>
</protein>
<evidence type="ECO:0000269" key="1">
    <source>
    </source>
</evidence>
<evidence type="ECO:0000303" key="2">
    <source>
    </source>
</evidence>
<evidence type="ECO:0000303" key="3">
    <source ref="2"/>
</evidence>
<evidence type="ECO:0000305" key="4"/>
<evidence type="ECO:0000305" key="5">
    <source>
    </source>
</evidence>
<proteinExistence type="evidence at protein level"/>
<keyword id="KW-0903">Direct protein sequencing</keyword>
<keyword id="KW-0964">Secreted</keyword>
<keyword id="KW-0800">Toxin</keyword>
<organism>
    <name type="scientific">Cupiennius salei</name>
    <name type="common">American wandering spider</name>
    <dbReference type="NCBI Taxonomy" id="6928"/>
    <lineage>
        <taxon>Eukaryota</taxon>
        <taxon>Metazoa</taxon>
        <taxon>Ecdysozoa</taxon>
        <taxon>Arthropoda</taxon>
        <taxon>Chelicerata</taxon>
        <taxon>Arachnida</taxon>
        <taxon>Araneae</taxon>
        <taxon>Araneomorphae</taxon>
        <taxon>Entelegynae</taxon>
        <taxon>Lycosoidea</taxon>
        <taxon>Ctenidae</taxon>
        <taxon>Cupiennius</taxon>
    </lineage>
</organism>
<sequence length="19" mass="2566">LNPFRWMINKYREWKNKKN</sequence>
<name>TXS6B_CUPSA</name>
<comment type="subcellular location">
    <subcellularLocation>
        <location evidence="1">Secreted</location>
    </subcellularLocation>
</comment>
<comment type="tissue specificity">
    <text evidence="5">Expressed by the venom gland.</text>
</comment>
<comment type="mass spectrometry" mass="2564.361" method="Electrospray" evidence="1"/>
<comment type="similarity">
    <text evidence="4">Belongs to the cationic peptide 04 (cupiennin) family. 06 subfamily.</text>
</comment>
<reference key="1">
    <citation type="journal article" date="2012" name="FEBS J.">
        <title>Multicomponent venom of the spider Cupiennius salei: a bioanalytical investigation applying different strategies.</title>
        <authorList>
            <person name="Trachsel C."/>
            <person name="Siegemund D."/>
            <person name="Kampfer U."/>
            <person name="Kopp L.S."/>
            <person name="Buhr C."/>
            <person name="Grossmann J."/>
            <person name="Luthi C."/>
            <person name="Cunningham M."/>
            <person name="Nentwig W."/>
            <person name="Kuhn-Nentwig L."/>
            <person name="Schurch S."/>
            <person name="Schaller J."/>
        </authorList>
    </citation>
    <scope>PROTEIN SEQUENCE</scope>
    <scope>MASS SPECTROMETRY</scope>
    <source>
        <tissue>Venom</tissue>
    </source>
</reference>
<reference key="2">
    <citation type="unpublished observations" date="2015-06">
        <authorList>
            <person name="Kuhn-Nentwig L."/>
            <person name="Gohel T."/>
        </authorList>
    </citation>
    <scope>NOMENCLATURE</scope>
</reference>
<feature type="peptide" id="PRO_0000421231" description="Short cationic peptide-6b" evidence="1">
    <location>
        <begin position="1"/>
        <end position="19"/>
    </location>
</feature>
<accession>B3EWX2</accession>